<organism>
    <name type="scientific">Ictalurus punctatus</name>
    <name type="common">Channel catfish</name>
    <name type="synonym">Silurus punctatus</name>
    <dbReference type="NCBI Taxonomy" id="7998"/>
    <lineage>
        <taxon>Eukaryota</taxon>
        <taxon>Metazoa</taxon>
        <taxon>Chordata</taxon>
        <taxon>Craniata</taxon>
        <taxon>Vertebrata</taxon>
        <taxon>Euteleostomi</taxon>
        <taxon>Actinopterygii</taxon>
        <taxon>Neopterygii</taxon>
        <taxon>Teleostei</taxon>
        <taxon>Ostariophysi</taxon>
        <taxon>Siluriformes</taxon>
        <taxon>Ictaluridae</taxon>
        <taxon>Ictalurus</taxon>
    </lineage>
</organism>
<proteinExistence type="evidence at transcript level"/>
<reference key="1">
    <citation type="journal article" date="2003" name="Gene">
        <title>Translational machinery of channel catfish: II. Complementary DNA and expression of the complete set of 47 60S ribosomal proteins.</title>
        <authorList>
            <person name="Patterson A.P."/>
            <person name="Karsi A."/>
            <person name="Feng J."/>
            <person name="Liu Z.J."/>
        </authorList>
    </citation>
    <scope>NUCLEOTIDE SEQUENCE [MRNA]</scope>
</reference>
<feature type="initiator methionine" description="Removed" evidence="1">
    <location>
        <position position="1"/>
    </location>
</feature>
<feature type="chain" id="PRO_0000129750" description="Large ribosomal subunit protein uL2">
    <location>
        <begin position="2"/>
        <end position="257"/>
    </location>
</feature>
<feature type="region of interest" description="Disordered" evidence="3">
    <location>
        <begin position="207"/>
        <end position="226"/>
    </location>
</feature>
<accession>Q90YW1</accession>
<keyword id="KW-0963">Cytoplasm</keyword>
<keyword id="KW-0687">Ribonucleoprotein</keyword>
<keyword id="KW-0689">Ribosomal protein</keyword>
<keyword id="KW-0694">RNA-binding</keyword>
<keyword id="KW-0699">rRNA-binding</keyword>
<protein>
    <recommendedName>
        <fullName evidence="4">Large ribosomal subunit protein uL2</fullName>
    </recommendedName>
    <alternativeName>
        <fullName>60S ribosomal protein L8</fullName>
    </alternativeName>
</protein>
<evidence type="ECO:0000250" key="1"/>
<evidence type="ECO:0000250" key="2">
    <source>
        <dbReference type="UniProtKB" id="P62917"/>
    </source>
</evidence>
<evidence type="ECO:0000256" key="3">
    <source>
        <dbReference type="SAM" id="MobiDB-lite"/>
    </source>
</evidence>
<evidence type="ECO:0000305" key="4"/>
<dbReference type="EMBL" id="AF401561">
    <property type="protein sequence ID" value="AAK95133.1"/>
    <property type="molecule type" value="mRNA"/>
</dbReference>
<dbReference type="RefSeq" id="NP_001187037.1">
    <property type="nucleotide sequence ID" value="NM_001200108.1"/>
</dbReference>
<dbReference type="SMR" id="Q90YW1"/>
<dbReference type="STRING" id="7998.ENSIPUP00000034487"/>
<dbReference type="GeneID" id="100304524"/>
<dbReference type="KEGG" id="ipu:100304524"/>
<dbReference type="CTD" id="6132"/>
<dbReference type="OrthoDB" id="10267824at2759"/>
<dbReference type="Proteomes" id="UP000221080">
    <property type="component" value="Chromosome 6"/>
</dbReference>
<dbReference type="GO" id="GO:0022625">
    <property type="term" value="C:cytosolic large ribosomal subunit"/>
    <property type="evidence" value="ECO:0007669"/>
    <property type="project" value="TreeGrafter"/>
</dbReference>
<dbReference type="GO" id="GO:0019843">
    <property type="term" value="F:rRNA binding"/>
    <property type="evidence" value="ECO:0007669"/>
    <property type="project" value="UniProtKB-KW"/>
</dbReference>
<dbReference type="GO" id="GO:0003735">
    <property type="term" value="F:structural constituent of ribosome"/>
    <property type="evidence" value="ECO:0007669"/>
    <property type="project" value="InterPro"/>
</dbReference>
<dbReference type="GO" id="GO:0002181">
    <property type="term" value="P:cytoplasmic translation"/>
    <property type="evidence" value="ECO:0007669"/>
    <property type="project" value="TreeGrafter"/>
</dbReference>
<dbReference type="FunFam" id="4.10.950.10:FF:000002">
    <property type="entry name" value="60S ribosomal protein L2"/>
    <property type="match status" value="1"/>
</dbReference>
<dbReference type="FunFam" id="2.30.30.30:FF:000006">
    <property type="entry name" value="60S ribosomal protein L8"/>
    <property type="match status" value="1"/>
</dbReference>
<dbReference type="FunFam" id="2.40.50.140:FF:000581">
    <property type="entry name" value="Ribosomal protein L8"/>
    <property type="match status" value="1"/>
</dbReference>
<dbReference type="Gene3D" id="2.30.30.30">
    <property type="match status" value="1"/>
</dbReference>
<dbReference type="Gene3D" id="2.40.50.140">
    <property type="entry name" value="Nucleic acid-binding proteins"/>
    <property type="match status" value="1"/>
</dbReference>
<dbReference type="Gene3D" id="4.10.950.10">
    <property type="entry name" value="Ribosomal protein L2, domain 3"/>
    <property type="match status" value="1"/>
</dbReference>
<dbReference type="InterPro" id="IPR012340">
    <property type="entry name" value="NA-bd_OB-fold"/>
</dbReference>
<dbReference type="InterPro" id="IPR014722">
    <property type="entry name" value="Rib_uL2_dom2"/>
</dbReference>
<dbReference type="InterPro" id="IPR002171">
    <property type="entry name" value="Ribosomal_uL2"/>
</dbReference>
<dbReference type="InterPro" id="IPR023672">
    <property type="entry name" value="Ribosomal_uL2_arc_euk"/>
</dbReference>
<dbReference type="InterPro" id="IPR022669">
    <property type="entry name" value="Ribosomal_uL2_C"/>
</dbReference>
<dbReference type="InterPro" id="IPR022671">
    <property type="entry name" value="Ribosomal_uL2_CS"/>
</dbReference>
<dbReference type="InterPro" id="IPR014726">
    <property type="entry name" value="Ribosomal_uL2_dom3"/>
</dbReference>
<dbReference type="InterPro" id="IPR022666">
    <property type="entry name" value="Ribosomal_uL2_RNA-bd_dom"/>
</dbReference>
<dbReference type="InterPro" id="IPR008991">
    <property type="entry name" value="Translation_prot_SH3-like_sf"/>
</dbReference>
<dbReference type="NCBIfam" id="NF007180">
    <property type="entry name" value="PRK09612.1"/>
    <property type="match status" value="1"/>
</dbReference>
<dbReference type="PANTHER" id="PTHR13691:SF16">
    <property type="entry name" value="LARGE RIBOSOMAL SUBUNIT PROTEIN UL2"/>
    <property type="match status" value="1"/>
</dbReference>
<dbReference type="PANTHER" id="PTHR13691">
    <property type="entry name" value="RIBOSOMAL PROTEIN L2"/>
    <property type="match status" value="1"/>
</dbReference>
<dbReference type="Pfam" id="PF00181">
    <property type="entry name" value="Ribosomal_L2"/>
    <property type="match status" value="1"/>
</dbReference>
<dbReference type="Pfam" id="PF03947">
    <property type="entry name" value="Ribosomal_L2_C"/>
    <property type="match status" value="1"/>
</dbReference>
<dbReference type="PIRSF" id="PIRSF002158">
    <property type="entry name" value="Ribosomal_L2"/>
    <property type="match status" value="1"/>
</dbReference>
<dbReference type="SMART" id="SM01383">
    <property type="entry name" value="Ribosomal_L2"/>
    <property type="match status" value="1"/>
</dbReference>
<dbReference type="SMART" id="SM01382">
    <property type="entry name" value="Ribosomal_L2_C"/>
    <property type="match status" value="1"/>
</dbReference>
<dbReference type="SUPFAM" id="SSF50249">
    <property type="entry name" value="Nucleic acid-binding proteins"/>
    <property type="match status" value="1"/>
</dbReference>
<dbReference type="SUPFAM" id="SSF50104">
    <property type="entry name" value="Translation proteins SH3-like domain"/>
    <property type="match status" value="1"/>
</dbReference>
<dbReference type="PROSITE" id="PS00467">
    <property type="entry name" value="RIBOSOMAL_L2"/>
    <property type="match status" value="1"/>
</dbReference>
<comment type="function">
    <text evidence="2">Component of the large ribosomal subunit. The ribosome is a large ribonucleoprotein complex responsible for the synthesis of proteins in the cell.</text>
</comment>
<comment type="subunit">
    <text evidence="2">Component of the large ribosomal subunit.</text>
</comment>
<comment type="subcellular location">
    <subcellularLocation>
        <location>Cytoplasm</location>
    </subcellularLocation>
</comment>
<comment type="similarity">
    <text evidence="4">Belongs to the universal ribosomal protein uL2 family.</text>
</comment>
<sequence>MGRVIRAQRKGAGSVFKAHVKHRKGAAKLRHIDFAERHGYIKGIVKDIIHDPGRGTPLAKVVFRDPYRFKKRTELFIAAEGIHTGQFVFCGKKAQLNIGNVLPVGVMPEGTIICCLEEKPGDRGKLARASGNYATVISHNPETKKSRVKLPSGAKKVISSTNRAVVGVVAGGGRIDKPILKAGRAYHKYKVKRNCWPRVRGVAMNPVEHPFGGGNHQHIGKPSTIRRDVPAGRKVGLIAARRTGRLRGTKTVQEKEN</sequence>
<gene>
    <name type="primary">rpl8</name>
</gene>
<name>RL8_ICTPU</name>